<gene>
    <name evidence="1" type="primary">mraY</name>
    <name type="ordered locus">MUL_3504</name>
</gene>
<organism>
    <name type="scientific">Mycobacterium ulcerans (strain Agy99)</name>
    <dbReference type="NCBI Taxonomy" id="362242"/>
    <lineage>
        <taxon>Bacteria</taxon>
        <taxon>Bacillati</taxon>
        <taxon>Actinomycetota</taxon>
        <taxon>Actinomycetes</taxon>
        <taxon>Mycobacteriales</taxon>
        <taxon>Mycobacteriaceae</taxon>
        <taxon>Mycobacterium</taxon>
        <taxon>Mycobacterium ulcerans group</taxon>
    </lineage>
</organism>
<proteinExistence type="inferred from homology"/>
<evidence type="ECO:0000255" key="1">
    <source>
        <dbReference type="HAMAP-Rule" id="MF_00038"/>
    </source>
</evidence>
<sequence length="359" mass="37772">MRQIMIAVAIAVAVSILLTPALIRLFTKQGFGHQIREDGPPSHHSKRGTPSMGGVAILAGIWAGYFGTHLAGLAFDGEGITASGLLVLGLATSLGGVGFLDDMIKLRRSRNLGLNKTAKTVGQITSAVLFAVLVLQFRNPAGLAPASAELSYVREIATVTLTPALFVLFCVLVVSAWSNAVNFTDGLDGLAAGCMAMVTGAYVLITFWQDHNACVTAPGLGCYNVRDPLDLALIAAATAGACIGFLWWNAAPAKIFMGDTGSLALGGIIAGLSVTSRTEILAVVLGALFVAEITSVVLQILTFRTTGRRVFRMAPFHHHFELVGWAETTVIIRFWLLTAITCGLGVALFYGEWLAAIGA</sequence>
<reference key="1">
    <citation type="journal article" date="2007" name="Genome Res.">
        <title>Reductive evolution and niche adaptation inferred from the genome of Mycobacterium ulcerans, the causative agent of Buruli ulcer.</title>
        <authorList>
            <person name="Stinear T.P."/>
            <person name="Seemann T."/>
            <person name="Pidot S."/>
            <person name="Frigui W."/>
            <person name="Reysset G."/>
            <person name="Garnier T."/>
            <person name="Meurice G."/>
            <person name="Simon D."/>
            <person name="Bouchier C."/>
            <person name="Ma L."/>
            <person name="Tichit M."/>
            <person name="Porter J.L."/>
            <person name="Ryan J."/>
            <person name="Johnson P.D.R."/>
            <person name="Davies J.K."/>
            <person name="Jenkin G.A."/>
            <person name="Small P.L.C."/>
            <person name="Jones L.M."/>
            <person name="Tekaia F."/>
            <person name="Laval F."/>
            <person name="Daffe M."/>
            <person name="Parkhill J."/>
            <person name="Cole S.T."/>
        </authorList>
    </citation>
    <scope>NUCLEOTIDE SEQUENCE [LARGE SCALE GENOMIC DNA]</scope>
    <source>
        <strain>Agy99</strain>
    </source>
</reference>
<comment type="function">
    <text evidence="1">Catalyzes the initial step of the lipid cycle reactions in the biosynthesis of the cell wall peptidoglycan: transfers peptidoglycan precursor phospho-MurNAc-pentapeptide from UDP-MurNAc-pentapeptide onto the lipid carrier undecaprenyl phosphate, yielding undecaprenyl-pyrophosphoryl-MurNAc-pentapeptide, known as lipid I.</text>
</comment>
<comment type="catalytic activity">
    <reaction evidence="1">
        <text>UDP-N-acetyl-alpha-D-muramoyl-L-alanyl-gamma-D-glutamyl-meso-2,6-diaminopimeloyl-D-alanyl-D-alanine + di-trans,octa-cis-undecaprenyl phosphate = di-trans,octa-cis-undecaprenyl diphospho-N-acetyl-alpha-D-muramoyl-L-alanyl-D-glutamyl-meso-2,6-diaminopimeloyl-D-alanyl-D-alanine + UMP</text>
        <dbReference type="Rhea" id="RHEA:28386"/>
        <dbReference type="ChEBI" id="CHEBI:57865"/>
        <dbReference type="ChEBI" id="CHEBI:60392"/>
        <dbReference type="ChEBI" id="CHEBI:61386"/>
        <dbReference type="ChEBI" id="CHEBI:61387"/>
        <dbReference type="EC" id="2.7.8.13"/>
    </reaction>
</comment>
<comment type="cofactor">
    <cofactor evidence="1">
        <name>Mg(2+)</name>
        <dbReference type="ChEBI" id="CHEBI:18420"/>
    </cofactor>
</comment>
<comment type="pathway">
    <text evidence="1">Cell wall biogenesis; peptidoglycan biosynthesis.</text>
</comment>
<comment type="subcellular location">
    <subcellularLocation>
        <location evidence="1">Cell membrane</location>
        <topology evidence="1">Multi-pass membrane protein</topology>
    </subcellularLocation>
</comment>
<comment type="similarity">
    <text evidence="1">Belongs to the glycosyltransferase 4 family. MraY subfamily.</text>
</comment>
<dbReference type="EC" id="2.7.8.13" evidence="1"/>
<dbReference type="EMBL" id="CP000325">
    <property type="protein sequence ID" value="ABL05659.1"/>
    <property type="molecule type" value="Genomic_DNA"/>
</dbReference>
<dbReference type="RefSeq" id="WP_011741265.1">
    <property type="nucleotide sequence ID" value="NC_008611.1"/>
</dbReference>
<dbReference type="SMR" id="A0PTJ0"/>
<dbReference type="KEGG" id="mul:MUL_3504"/>
<dbReference type="eggNOG" id="COG0472">
    <property type="taxonomic scope" value="Bacteria"/>
</dbReference>
<dbReference type="HOGENOM" id="CLU_023982_0_1_11"/>
<dbReference type="UniPathway" id="UPA00219"/>
<dbReference type="Proteomes" id="UP000000765">
    <property type="component" value="Chromosome"/>
</dbReference>
<dbReference type="GO" id="GO:0005886">
    <property type="term" value="C:plasma membrane"/>
    <property type="evidence" value="ECO:0007669"/>
    <property type="project" value="UniProtKB-SubCell"/>
</dbReference>
<dbReference type="GO" id="GO:0046872">
    <property type="term" value="F:metal ion binding"/>
    <property type="evidence" value="ECO:0007669"/>
    <property type="project" value="UniProtKB-KW"/>
</dbReference>
<dbReference type="GO" id="GO:0008963">
    <property type="term" value="F:phospho-N-acetylmuramoyl-pentapeptide-transferase activity"/>
    <property type="evidence" value="ECO:0007669"/>
    <property type="project" value="UniProtKB-UniRule"/>
</dbReference>
<dbReference type="GO" id="GO:0051992">
    <property type="term" value="F:UDP-N-acetylmuramoyl-L-alanyl-D-glutamyl-meso-2,6-diaminopimelyl-D-alanyl-D-alanine:undecaprenyl-phosphate transferase activity"/>
    <property type="evidence" value="ECO:0007669"/>
    <property type="project" value="RHEA"/>
</dbReference>
<dbReference type="GO" id="GO:0051301">
    <property type="term" value="P:cell division"/>
    <property type="evidence" value="ECO:0007669"/>
    <property type="project" value="UniProtKB-KW"/>
</dbReference>
<dbReference type="GO" id="GO:0071555">
    <property type="term" value="P:cell wall organization"/>
    <property type="evidence" value="ECO:0007669"/>
    <property type="project" value="UniProtKB-KW"/>
</dbReference>
<dbReference type="GO" id="GO:0009252">
    <property type="term" value="P:peptidoglycan biosynthetic process"/>
    <property type="evidence" value="ECO:0007669"/>
    <property type="project" value="UniProtKB-UniRule"/>
</dbReference>
<dbReference type="GO" id="GO:0008360">
    <property type="term" value="P:regulation of cell shape"/>
    <property type="evidence" value="ECO:0007669"/>
    <property type="project" value="UniProtKB-KW"/>
</dbReference>
<dbReference type="CDD" id="cd06852">
    <property type="entry name" value="GT_MraY"/>
    <property type="match status" value="1"/>
</dbReference>
<dbReference type="HAMAP" id="MF_00038">
    <property type="entry name" value="MraY"/>
    <property type="match status" value="1"/>
</dbReference>
<dbReference type="InterPro" id="IPR000715">
    <property type="entry name" value="Glycosyl_transferase_4"/>
</dbReference>
<dbReference type="InterPro" id="IPR003524">
    <property type="entry name" value="PNAcMuramoyl-5peptid_Trfase"/>
</dbReference>
<dbReference type="InterPro" id="IPR018480">
    <property type="entry name" value="PNAcMuramoyl-5peptid_Trfase_CS"/>
</dbReference>
<dbReference type="NCBIfam" id="TIGR00445">
    <property type="entry name" value="mraY"/>
    <property type="match status" value="1"/>
</dbReference>
<dbReference type="PANTHER" id="PTHR22926">
    <property type="entry name" value="PHOSPHO-N-ACETYLMURAMOYL-PENTAPEPTIDE-TRANSFERASE"/>
    <property type="match status" value="1"/>
</dbReference>
<dbReference type="PANTHER" id="PTHR22926:SF5">
    <property type="entry name" value="PHOSPHO-N-ACETYLMURAMOYL-PENTAPEPTIDE-TRANSFERASE HOMOLOG"/>
    <property type="match status" value="1"/>
</dbReference>
<dbReference type="Pfam" id="PF00953">
    <property type="entry name" value="Glycos_transf_4"/>
    <property type="match status" value="1"/>
</dbReference>
<dbReference type="Pfam" id="PF10555">
    <property type="entry name" value="MraY_sig1"/>
    <property type="match status" value="1"/>
</dbReference>
<dbReference type="PROSITE" id="PS01347">
    <property type="entry name" value="MRAY_1"/>
    <property type="match status" value="1"/>
</dbReference>
<dbReference type="PROSITE" id="PS01348">
    <property type="entry name" value="MRAY_2"/>
    <property type="match status" value="1"/>
</dbReference>
<feature type="chain" id="PRO_1000003017" description="Phospho-N-acetylmuramoyl-pentapeptide-transferase">
    <location>
        <begin position="1"/>
        <end position="359"/>
    </location>
</feature>
<feature type="transmembrane region" description="Helical" evidence="1">
    <location>
        <begin position="3"/>
        <end position="23"/>
    </location>
</feature>
<feature type="transmembrane region" description="Helical" evidence="1">
    <location>
        <begin position="55"/>
        <end position="75"/>
    </location>
</feature>
<feature type="transmembrane region" description="Helical" evidence="1">
    <location>
        <begin position="80"/>
        <end position="100"/>
    </location>
</feature>
<feature type="transmembrane region" description="Helical" evidence="1">
    <location>
        <begin position="117"/>
        <end position="137"/>
    </location>
</feature>
<feature type="transmembrane region" description="Helical" evidence="1">
    <location>
        <begin position="156"/>
        <end position="176"/>
    </location>
</feature>
<feature type="transmembrane region" description="Helical" evidence="1">
    <location>
        <begin position="187"/>
        <end position="207"/>
    </location>
</feature>
<feature type="transmembrane region" description="Helical" evidence="1">
    <location>
        <begin position="231"/>
        <end position="251"/>
    </location>
</feature>
<feature type="transmembrane region" description="Helical" evidence="1">
    <location>
        <begin position="255"/>
        <end position="275"/>
    </location>
</feature>
<feature type="transmembrane region" description="Helical" evidence="1">
    <location>
        <begin position="280"/>
        <end position="300"/>
    </location>
</feature>
<feature type="transmembrane region" description="Helical" evidence="1">
    <location>
        <begin position="334"/>
        <end position="354"/>
    </location>
</feature>
<accession>A0PTJ0</accession>
<protein>
    <recommendedName>
        <fullName evidence="1">Phospho-N-acetylmuramoyl-pentapeptide-transferase</fullName>
        <ecNumber evidence="1">2.7.8.13</ecNumber>
    </recommendedName>
    <alternativeName>
        <fullName evidence="1">UDP-MurNAc-pentapeptide phosphotransferase</fullName>
    </alternativeName>
</protein>
<keyword id="KW-0131">Cell cycle</keyword>
<keyword id="KW-0132">Cell division</keyword>
<keyword id="KW-1003">Cell membrane</keyword>
<keyword id="KW-0133">Cell shape</keyword>
<keyword id="KW-0961">Cell wall biogenesis/degradation</keyword>
<keyword id="KW-0460">Magnesium</keyword>
<keyword id="KW-0472">Membrane</keyword>
<keyword id="KW-0479">Metal-binding</keyword>
<keyword id="KW-0573">Peptidoglycan synthesis</keyword>
<keyword id="KW-0808">Transferase</keyword>
<keyword id="KW-0812">Transmembrane</keyword>
<keyword id="KW-1133">Transmembrane helix</keyword>
<name>MRAY_MYCUA</name>